<name>GPDA_SALHS</name>
<proteinExistence type="inferred from homology"/>
<protein>
    <recommendedName>
        <fullName evidence="1">Glycerol-3-phosphate dehydrogenase [NAD(P)+]</fullName>
        <ecNumber evidence="1">1.1.1.94</ecNumber>
    </recommendedName>
    <alternativeName>
        <fullName evidence="1">NAD(P)(+)-dependent glycerol-3-phosphate dehydrogenase</fullName>
    </alternativeName>
    <alternativeName>
        <fullName evidence="1">NAD(P)H-dependent dihydroxyacetone-phosphate reductase</fullName>
    </alternativeName>
</protein>
<evidence type="ECO:0000255" key="1">
    <source>
        <dbReference type="HAMAP-Rule" id="MF_00394"/>
    </source>
</evidence>
<accession>B4T993</accession>
<gene>
    <name evidence="1" type="primary">gpsA</name>
    <name type="ordered locus">SeHA_C4025</name>
</gene>
<sequence length="339" mass="36343">MNQSNASMTVIGAGSYGTALAITLARNGHQVVLWGHDPKHIATLEHDRCNVAFLPDVPFPDTLHLESDLATALAASRNILVVVPSHVFSDVLRQIKPLMRPDARLVWATKGLEAETGRLLQDVAREALGDQIPLAVISGPTFAKELAAGLPTAISLASTDETFADDLQQLLHCGKSFRVYINADFIGVQLGGAVKNVIAIGAGMSDGIGFGANARTALITRGLTEMSRLGAALGADPATFMGMAGLGDLVLTCTDNQSRNRRFGMMLGQGMDVKGAQDKIGQVVEGYRNTKEVRELAHRFGVEMPITEEIYQVLYCGKNAREAALTLLGRARKEELSRH</sequence>
<comment type="function">
    <text evidence="1">Catalyzes the reduction of the glycolytic intermediate dihydroxyacetone phosphate (DHAP) to sn-glycerol 3-phosphate (G3P), the key precursor for phospholipid synthesis.</text>
</comment>
<comment type="catalytic activity">
    <reaction evidence="1">
        <text>sn-glycerol 3-phosphate + NAD(+) = dihydroxyacetone phosphate + NADH + H(+)</text>
        <dbReference type="Rhea" id="RHEA:11092"/>
        <dbReference type="ChEBI" id="CHEBI:15378"/>
        <dbReference type="ChEBI" id="CHEBI:57540"/>
        <dbReference type="ChEBI" id="CHEBI:57597"/>
        <dbReference type="ChEBI" id="CHEBI:57642"/>
        <dbReference type="ChEBI" id="CHEBI:57945"/>
        <dbReference type="EC" id="1.1.1.94"/>
    </reaction>
    <physiologicalReaction direction="right-to-left" evidence="1">
        <dbReference type="Rhea" id="RHEA:11094"/>
    </physiologicalReaction>
</comment>
<comment type="catalytic activity">
    <reaction evidence="1">
        <text>sn-glycerol 3-phosphate + NADP(+) = dihydroxyacetone phosphate + NADPH + H(+)</text>
        <dbReference type="Rhea" id="RHEA:11096"/>
        <dbReference type="ChEBI" id="CHEBI:15378"/>
        <dbReference type="ChEBI" id="CHEBI:57597"/>
        <dbReference type="ChEBI" id="CHEBI:57642"/>
        <dbReference type="ChEBI" id="CHEBI:57783"/>
        <dbReference type="ChEBI" id="CHEBI:58349"/>
        <dbReference type="EC" id="1.1.1.94"/>
    </reaction>
    <physiologicalReaction direction="right-to-left" evidence="1">
        <dbReference type="Rhea" id="RHEA:11098"/>
    </physiologicalReaction>
</comment>
<comment type="pathway">
    <text evidence="1">Membrane lipid metabolism; glycerophospholipid metabolism.</text>
</comment>
<comment type="subcellular location">
    <subcellularLocation>
        <location evidence="1">Cytoplasm</location>
    </subcellularLocation>
</comment>
<comment type="similarity">
    <text evidence="1">Belongs to the NAD-dependent glycerol-3-phosphate dehydrogenase family.</text>
</comment>
<organism>
    <name type="scientific">Salmonella heidelberg (strain SL476)</name>
    <dbReference type="NCBI Taxonomy" id="454169"/>
    <lineage>
        <taxon>Bacteria</taxon>
        <taxon>Pseudomonadati</taxon>
        <taxon>Pseudomonadota</taxon>
        <taxon>Gammaproteobacteria</taxon>
        <taxon>Enterobacterales</taxon>
        <taxon>Enterobacteriaceae</taxon>
        <taxon>Salmonella</taxon>
    </lineage>
</organism>
<dbReference type="EC" id="1.1.1.94" evidence="1"/>
<dbReference type="EMBL" id="CP001120">
    <property type="protein sequence ID" value="ACF65938.1"/>
    <property type="molecule type" value="Genomic_DNA"/>
</dbReference>
<dbReference type="RefSeq" id="WP_001076596.1">
    <property type="nucleotide sequence ID" value="NC_011083.1"/>
</dbReference>
<dbReference type="SMR" id="B4T993"/>
<dbReference type="KEGG" id="seh:SeHA_C4025"/>
<dbReference type="HOGENOM" id="CLU_033449_0_2_6"/>
<dbReference type="UniPathway" id="UPA00940"/>
<dbReference type="Proteomes" id="UP000001866">
    <property type="component" value="Chromosome"/>
</dbReference>
<dbReference type="GO" id="GO:0005829">
    <property type="term" value="C:cytosol"/>
    <property type="evidence" value="ECO:0007669"/>
    <property type="project" value="TreeGrafter"/>
</dbReference>
<dbReference type="GO" id="GO:0047952">
    <property type="term" value="F:glycerol-3-phosphate dehydrogenase [NAD(P)+] activity"/>
    <property type="evidence" value="ECO:0007669"/>
    <property type="project" value="UniProtKB-UniRule"/>
</dbReference>
<dbReference type="GO" id="GO:0051287">
    <property type="term" value="F:NAD binding"/>
    <property type="evidence" value="ECO:0007669"/>
    <property type="project" value="InterPro"/>
</dbReference>
<dbReference type="GO" id="GO:0005975">
    <property type="term" value="P:carbohydrate metabolic process"/>
    <property type="evidence" value="ECO:0007669"/>
    <property type="project" value="InterPro"/>
</dbReference>
<dbReference type="GO" id="GO:0046167">
    <property type="term" value="P:glycerol-3-phosphate biosynthetic process"/>
    <property type="evidence" value="ECO:0007669"/>
    <property type="project" value="UniProtKB-UniRule"/>
</dbReference>
<dbReference type="GO" id="GO:0046168">
    <property type="term" value="P:glycerol-3-phosphate catabolic process"/>
    <property type="evidence" value="ECO:0007669"/>
    <property type="project" value="InterPro"/>
</dbReference>
<dbReference type="GO" id="GO:0046474">
    <property type="term" value="P:glycerophospholipid biosynthetic process"/>
    <property type="evidence" value="ECO:0007669"/>
    <property type="project" value="TreeGrafter"/>
</dbReference>
<dbReference type="FunFam" id="1.10.1040.10:FF:000001">
    <property type="entry name" value="Glycerol-3-phosphate dehydrogenase [NAD(P)+]"/>
    <property type="match status" value="1"/>
</dbReference>
<dbReference type="FunFam" id="3.40.50.720:FF:000019">
    <property type="entry name" value="Glycerol-3-phosphate dehydrogenase [NAD(P)+]"/>
    <property type="match status" value="1"/>
</dbReference>
<dbReference type="Gene3D" id="1.10.1040.10">
    <property type="entry name" value="N-(1-d-carboxylethyl)-l-norvaline Dehydrogenase, domain 2"/>
    <property type="match status" value="1"/>
</dbReference>
<dbReference type="Gene3D" id="3.40.50.720">
    <property type="entry name" value="NAD(P)-binding Rossmann-like Domain"/>
    <property type="match status" value="1"/>
</dbReference>
<dbReference type="HAMAP" id="MF_00394">
    <property type="entry name" value="NAD_Glyc3P_dehydrog"/>
    <property type="match status" value="1"/>
</dbReference>
<dbReference type="InterPro" id="IPR008927">
    <property type="entry name" value="6-PGluconate_DH-like_C_sf"/>
</dbReference>
<dbReference type="InterPro" id="IPR013328">
    <property type="entry name" value="6PGD_dom2"/>
</dbReference>
<dbReference type="InterPro" id="IPR006168">
    <property type="entry name" value="G3P_DH_NAD-dep"/>
</dbReference>
<dbReference type="InterPro" id="IPR006109">
    <property type="entry name" value="G3P_DH_NAD-dep_C"/>
</dbReference>
<dbReference type="InterPro" id="IPR011128">
    <property type="entry name" value="G3P_DH_NAD-dep_N"/>
</dbReference>
<dbReference type="InterPro" id="IPR036291">
    <property type="entry name" value="NAD(P)-bd_dom_sf"/>
</dbReference>
<dbReference type="NCBIfam" id="NF000939">
    <property type="entry name" value="PRK00094.1-1"/>
    <property type="match status" value="1"/>
</dbReference>
<dbReference type="NCBIfam" id="NF000940">
    <property type="entry name" value="PRK00094.1-2"/>
    <property type="match status" value="1"/>
</dbReference>
<dbReference type="NCBIfam" id="NF000942">
    <property type="entry name" value="PRK00094.1-4"/>
    <property type="match status" value="1"/>
</dbReference>
<dbReference type="PANTHER" id="PTHR11728">
    <property type="entry name" value="GLYCEROL-3-PHOSPHATE DEHYDROGENASE"/>
    <property type="match status" value="1"/>
</dbReference>
<dbReference type="PANTHER" id="PTHR11728:SF1">
    <property type="entry name" value="GLYCEROL-3-PHOSPHATE DEHYDROGENASE [NAD(+)] 2, CHLOROPLASTIC"/>
    <property type="match status" value="1"/>
</dbReference>
<dbReference type="Pfam" id="PF07479">
    <property type="entry name" value="NAD_Gly3P_dh_C"/>
    <property type="match status" value="1"/>
</dbReference>
<dbReference type="Pfam" id="PF01210">
    <property type="entry name" value="NAD_Gly3P_dh_N"/>
    <property type="match status" value="1"/>
</dbReference>
<dbReference type="PIRSF" id="PIRSF000114">
    <property type="entry name" value="Glycerol-3-P_dh"/>
    <property type="match status" value="1"/>
</dbReference>
<dbReference type="PRINTS" id="PR00077">
    <property type="entry name" value="GPDHDRGNASE"/>
</dbReference>
<dbReference type="SUPFAM" id="SSF48179">
    <property type="entry name" value="6-phosphogluconate dehydrogenase C-terminal domain-like"/>
    <property type="match status" value="1"/>
</dbReference>
<dbReference type="SUPFAM" id="SSF51735">
    <property type="entry name" value="NAD(P)-binding Rossmann-fold domains"/>
    <property type="match status" value="1"/>
</dbReference>
<dbReference type="PROSITE" id="PS00957">
    <property type="entry name" value="NAD_G3PDH"/>
    <property type="match status" value="1"/>
</dbReference>
<feature type="chain" id="PRO_1000123184" description="Glycerol-3-phosphate dehydrogenase [NAD(P)+]">
    <location>
        <begin position="1"/>
        <end position="339"/>
    </location>
</feature>
<feature type="active site" description="Proton acceptor" evidence="1">
    <location>
        <position position="195"/>
    </location>
</feature>
<feature type="binding site" evidence="1">
    <location>
        <position position="15"/>
    </location>
    <ligand>
        <name>NADPH</name>
        <dbReference type="ChEBI" id="CHEBI:57783"/>
    </ligand>
</feature>
<feature type="binding site" evidence="1">
    <location>
        <position position="16"/>
    </location>
    <ligand>
        <name>NADPH</name>
        <dbReference type="ChEBI" id="CHEBI:57783"/>
    </ligand>
</feature>
<feature type="binding site" evidence="1">
    <location>
        <position position="36"/>
    </location>
    <ligand>
        <name>NADPH</name>
        <dbReference type="ChEBI" id="CHEBI:57783"/>
    </ligand>
</feature>
<feature type="binding site" evidence="1">
    <location>
        <position position="110"/>
    </location>
    <ligand>
        <name>NADPH</name>
        <dbReference type="ChEBI" id="CHEBI:57783"/>
    </ligand>
</feature>
<feature type="binding site" evidence="1">
    <location>
        <position position="110"/>
    </location>
    <ligand>
        <name>sn-glycerol 3-phosphate</name>
        <dbReference type="ChEBI" id="CHEBI:57597"/>
    </ligand>
</feature>
<feature type="binding site" evidence="1">
    <location>
        <position position="139"/>
    </location>
    <ligand>
        <name>sn-glycerol 3-phosphate</name>
        <dbReference type="ChEBI" id="CHEBI:57597"/>
    </ligand>
</feature>
<feature type="binding site" evidence="1">
    <location>
        <position position="141"/>
    </location>
    <ligand>
        <name>sn-glycerol 3-phosphate</name>
        <dbReference type="ChEBI" id="CHEBI:57597"/>
    </ligand>
</feature>
<feature type="binding site" evidence="1">
    <location>
        <position position="143"/>
    </location>
    <ligand>
        <name>NADPH</name>
        <dbReference type="ChEBI" id="CHEBI:57783"/>
    </ligand>
</feature>
<feature type="binding site" evidence="1">
    <location>
        <position position="195"/>
    </location>
    <ligand>
        <name>sn-glycerol 3-phosphate</name>
        <dbReference type="ChEBI" id="CHEBI:57597"/>
    </ligand>
</feature>
<feature type="binding site" evidence="1">
    <location>
        <position position="248"/>
    </location>
    <ligand>
        <name>sn-glycerol 3-phosphate</name>
        <dbReference type="ChEBI" id="CHEBI:57597"/>
    </ligand>
</feature>
<feature type="binding site" evidence="1">
    <location>
        <position position="258"/>
    </location>
    <ligand>
        <name>sn-glycerol 3-phosphate</name>
        <dbReference type="ChEBI" id="CHEBI:57597"/>
    </ligand>
</feature>
<feature type="binding site" evidence="1">
    <location>
        <position position="259"/>
    </location>
    <ligand>
        <name>NADPH</name>
        <dbReference type="ChEBI" id="CHEBI:57783"/>
    </ligand>
</feature>
<feature type="binding site" evidence="1">
    <location>
        <position position="259"/>
    </location>
    <ligand>
        <name>sn-glycerol 3-phosphate</name>
        <dbReference type="ChEBI" id="CHEBI:57597"/>
    </ligand>
</feature>
<feature type="binding site" evidence="1">
    <location>
        <position position="260"/>
    </location>
    <ligand>
        <name>sn-glycerol 3-phosphate</name>
        <dbReference type="ChEBI" id="CHEBI:57597"/>
    </ligand>
</feature>
<feature type="binding site" evidence="1">
    <location>
        <position position="283"/>
    </location>
    <ligand>
        <name>NADPH</name>
        <dbReference type="ChEBI" id="CHEBI:57783"/>
    </ligand>
</feature>
<feature type="binding site" evidence="1">
    <location>
        <position position="285"/>
    </location>
    <ligand>
        <name>NADPH</name>
        <dbReference type="ChEBI" id="CHEBI:57783"/>
    </ligand>
</feature>
<keyword id="KW-0963">Cytoplasm</keyword>
<keyword id="KW-0444">Lipid biosynthesis</keyword>
<keyword id="KW-0443">Lipid metabolism</keyword>
<keyword id="KW-0520">NAD</keyword>
<keyword id="KW-0521">NADP</keyword>
<keyword id="KW-0547">Nucleotide-binding</keyword>
<keyword id="KW-0560">Oxidoreductase</keyword>
<keyword id="KW-0594">Phospholipid biosynthesis</keyword>
<keyword id="KW-1208">Phospholipid metabolism</keyword>
<reference key="1">
    <citation type="journal article" date="2011" name="J. Bacteriol.">
        <title>Comparative genomics of 28 Salmonella enterica isolates: evidence for CRISPR-mediated adaptive sublineage evolution.</title>
        <authorList>
            <person name="Fricke W.F."/>
            <person name="Mammel M.K."/>
            <person name="McDermott P.F."/>
            <person name="Tartera C."/>
            <person name="White D.G."/>
            <person name="Leclerc J.E."/>
            <person name="Ravel J."/>
            <person name="Cebula T.A."/>
        </authorList>
    </citation>
    <scope>NUCLEOTIDE SEQUENCE [LARGE SCALE GENOMIC DNA]</scope>
    <source>
        <strain>SL476</strain>
    </source>
</reference>